<organism>
    <name type="scientific">Mycobacterium leprae (strain TN)</name>
    <dbReference type="NCBI Taxonomy" id="272631"/>
    <lineage>
        <taxon>Bacteria</taxon>
        <taxon>Bacillati</taxon>
        <taxon>Actinomycetota</taxon>
        <taxon>Actinomycetes</taxon>
        <taxon>Mycobacteriales</taxon>
        <taxon>Mycobacteriaceae</taxon>
        <taxon>Mycobacterium</taxon>
    </lineage>
</organism>
<feature type="chain" id="PRO_0000167992" description="Small ribosomal subunit protein bS20">
    <location>
        <begin position="1"/>
        <end position="86"/>
    </location>
</feature>
<feature type="region of interest" description="Disordered" evidence="2">
    <location>
        <begin position="1"/>
        <end position="25"/>
    </location>
</feature>
<name>RS20_MYCLE</name>
<comment type="function">
    <text evidence="1">Binds directly to 16S ribosomal RNA.</text>
</comment>
<comment type="similarity">
    <text evidence="1">Belongs to the bacterial ribosomal protein bS20 family.</text>
</comment>
<accession>O33132</accession>
<dbReference type="EMBL" id="Z99125">
    <property type="protein sequence ID" value="CAB16149.1"/>
    <property type="molecule type" value="Genomic_DNA"/>
</dbReference>
<dbReference type="EMBL" id="AL583919">
    <property type="protein sequence ID" value="CAC30112.1"/>
    <property type="molecule type" value="Genomic_DNA"/>
</dbReference>
<dbReference type="PIR" id="T10047">
    <property type="entry name" value="T10047"/>
</dbReference>
<dbReference type="RefSeq" id="NP_301509.1">
    <property type="nucleotide sequence ID" value="NC_002677.1"/>
</dbReference>
<dbReference type="RefSeq" id="WP_010907833.1">
    <property type="nucleotide sequence ID" value="NC_002677.1"/>
</dbReference>
<dbReference type="SMR" id="O33132"/>
<dbReference type="STRING" id="272631.gene:17574425"/>
<dbReference type="KEGG" id="mle:ML0604"/>
<dbReference type="PATRIC" id="fig|272631.5.peg.1062"/>
<dbReference type="Leproma" id="ML0604"/>
<dbReference type="eggNOG" id="COG0268">
    <property type="taxonomic scope" value="Bacteria"/>
</dbReference>
<dbReference type="HOGENOM" id="CLU_160655_0_1_11"/>
<dbReference type="OrthoDB" id="9807974at2"/>
<dbReference type="Proteomes" id="UP000000806">
    <property type="component" value="Chromosome"/>
</dbReference>
<dbReference type="GO" id="GO:0005829">
    <property type="term" value="C:cytosol"/>
    <property type="evidence" value="ECO:0007669"/>
    <property type="project" value="TreeGrafter"/>
</dbReference>
<dbReference type="GO" id="GO:0015935">
    <property type="term" value="C:small ribosomal subunit"/>
    <property type="evidence" value="ECO:0007669"/>
    <property type="project" value="TreeGrafter"/>
</dbReference>
<dbReference type="GO" id="GO:0070181">
    <property type="term" value="F:small ribosomal subunit rRNA binding"/>
    <property type="evidence" value="ECO:0007669"/>
    <property type="project" value="TreeGrafter"/>
</dbReference>
<dbReference type="GO" id="GO:0003735">
    <property type="term" value="F:structural constituent of ribosome"/>
    <property type="evidence" value="ECO:0007669"/>
    <property type="project" value="InterPro"/>
</dbReference>
<dbReference type="GO" id="GO:0006412">
    <property type="term" value="P:translation"/>
    <property type="evidence" value="ECO:0007669"/>
    <property type="project" value="UniProtKB-UniRule"/>
</dbReference>
<dbReference type="FunFam" id="1.20.58.110:FF:000001">
    <property type="entry name" value="30S ribosomal protein S20"/>
    <property type="match status" value="1"/>
</dbReference>
<dbReference type="Gene3D" id="1.20.58.110">
    <property type="entry name" value="Ribosomal protein S20"/>
    <property type="match status" value="1"/>
</dbReference>
<dbReference type="HAMAP" id="MF_00500">
    <property type="entry name" value="Ribosomal_bS20"/>
    <property type="match status" value="1"/>
</dbReference>
<dbReference type="InterPro" id="IPR002583">
    <property type="entry name" value="Ribosomal_bS20"/>
</dbReference>
<dbReference type="InterPro" id="IPR036510">
    <property type="entry name" value="Ribosomal_bS20_sf"/>
</dbReference>
<dbReference type="NCBIfam" id="TIGR00029">
    <property type="entry name" value="S20"/>
    <property type="match status" value="1"/>
</dbReference>
<dbReference type="PANTHER" id="PTHR33398">
    <property type="entry name" value="30S RIBOSOMAL PROTEIN S20"/>
    <property type="match status" value="1"/>
</dbReference>
<dbReference type="PANTHER" id="PTHR33398:SF1">
    <property type="entry name" value="SMALL RIBOSOMAL SUBUNIT PROTEIN BS20C"/>
    <property type="match status" value="1"/>
</dbReference>
<dbReference type="Pfam" id="PF01649">
    <property type="entry name" value="Ribosomal_S20p"/>
    <property type="match status" value="1"/>
</dbReference>
<dbReference type="SUPFAM" id="SSF46992">
    <property type="entry name" value="Ribosomal protein S20"/>
    <property type="match status" value="1"/>
</dbReference>
<gene>
    <name evidence="1" type="primary">rpsT</name>
    <name type="ordered locus">ML0604</name>
    <name type="ORF">MLCL536.06</name>
</gene>
<evidence type="ECO:0000255" key="1">
    <source>
        <dbReference type="HAMAP-Rule" id="MF_00500"/>
    </source>
</evidence>
<evidence type="ECO:0000256" key="2">
    <source>
        <dbReference type="SAM" id="MobiDB-lite"/>
    </source>
</evidence>
<evidence type="ECO:0000305" key="3"/>
<proteinExistence type="inferred from homology"/>
<keyword id="KW-1185">Reference proteome</keyword>
<keyword id="KW-0687">Ribonucleoprotein</keyword>
<keyword id="KW-0689">Ribosomal protein</keyword>
<keyword id="KW-0694">RNA-binding</keyword>
<keyword id="KW-0699">rRNA-binding</keyword>
<protein>
    <recommendedName>
        <fullName evidence="1">Small ribosomal subunit protein bS20</fullName>
    </recommendedName>
    <alternativeName>
        <fullName evidence="3">30S ribosomal protein S20</fullName>
    </alternativeName>
</protein>
<reference key="1">
    <citation type="journal article" date="2001" name="Nature">
        <title>Massive gene decay in the leprosy bacillus.</title>
        <authorList>
            <person name="Cole S.T."/>
            <person name="Eiglmeier K."/>
            <person name="Parkhill J."/>
            <person name="James K.D."/>
            <person name="Thomson N.R."/>
            <person name="Wheeler P.R."/>
            <person name="Honore N."/>
            <person name="Garnier T."/>
            <person name="Churcher C.M."/>
            <person name="Harris D.E."/>
            <person name="Mungall K.L."/>
            <person name="Basham D."/>
            <person name="Brown D."/>
            <person name="Chillingworth T."/>
            <person name="Connor R."/>
            <person name="Davies R.M."/>
            <person name="Devlin K."/>
            <person name="Duthoy S."/>
            <person name="Feltwell T."/>
            <person name="Fraser A."/>
            <person name="Hamlin N."/>
            <person name="Holroyd S."/>
            <person name="Hornsby T."/>
            <person name="Jagels K."/>
            <person name="Lacroix C."/>
            <person name="Maclean J."/>
            <person name="Moule S."/>
            <person name="Murphy L.D."/>
            <person name="Oliver K."/>
            <person name="Quail M.A."/>
            <person name="Rajandream M.A."/>
            <person name="Rutherford K.M."/>
            <person name="Rutter S."/>
            <person name="Seeger K."/>
            <person name="Simon S."/>
            <person name="Simmonds M."/>
            <person name="Skelton J."/>
            <person name="Squares R."/>
            <person name="Squares S."/>
            <person name="Stevens K."/>
            <person name="Taylor K."/>
            <person name="Whitehead S."/>
            <person name="Woodward J.R."/>
            <person name="Barrell B.G."/>
        </authorList>
    </citation>
    <scope>NUCLEOTIDE SEQUENCE [LARGE SCALE GENOMIC DNA]</scope>
    <source>
        <strain>TN</strain>
    </source>
</reference>
<sequence length="86" mass="9609">MTNIKSQQKRNRTNERARLRNKSVKSSLRTAVRAFREAVHAGEKEKAAKLLVSTSRKLDKAASKGVIHKNQAANKKSALARTLNKL</sequence>